<dbReference type="EC" id="6.1.1.15" evidence="1"/>
<dbReference type="EMBL" id="AE017199">
    <property type="protein sequence ID" value="AAR39063.1"/>
    <property type="molecule type" value="Genomic_DNA"/>
</dbReference>
<dbReference type="SMR" id="Q74ND5"/>
<dbReference type="STRING" id="228908.NEQ210"/>
<dbReference type="EnsemblBacteria" id="AAR39063">
    <property type="protein sequence ID" value="AAR39063"/>
    <property type="gene ID" value="NEQ210"/>
</dbReference>
<dbReference type="KEGG" id="neq:NEQ210"/>
<dbReference type="PATRIC" id="fig|228908.8.peg.213"/>
<dbReference type="HOGENOM" id="CLU_001882_4_2_2"/>
<dbReference type="Proteomes" id="UP000000578">
    <property type="component" value="Chromosome"/>
</dbReference>
<dbReference type="GO" id="GO:0017101">
    <property type="term" value="C:aminoacyl-tRNA synthetase multienzyme complex"/>
    <property type="evidence" value="ECO:0007669"/>
    <property type="project" value="TreeGrafter"/>
</dbReference>
<dbReference type="GO" id="GO:0005737">
    <property type="term" value="C:cytoplasm"/>
    <property type="evidence" value="ECO:0007669"/>
    <property type="project" value="UniProtKB-SubCell"/>
</dbReference>
<dbReference type="GO" id="GO:0005524">
    <property type="term" value="F:ATP binding"/>
    <property type="evidence" value="ECO:0007669"/>
    <property type="project" value="UniProtKB-UniRule"/>
</dbReference>
<dbReference type="GO" id="GO:0004827">
    <property type="term" value="F:proline-tRNA ligase activity"/>
    <property type="evidence" value="ECO:0007669"/>
    <property type="project" value="UniProtKB-UniRule"/>
</dbReference>
<dbReference type="GO" id="GO:0006433">
    <property type="term" value="P:prolyl-tRNA aminoacylation"/>
    <property type="evidence" value="ECO:0007669"/>
    <property type="project" value="UniProtKB-UniRule"/>
</dbReference>
<dbReference type="CDD" id="cd00862">
    <property type="entry name" value="ProRS_anticodon_zinc"/>
    <property type="match status" value="1"/>
</dbReference>
<dbReference type="Gene3D" id="3.40.50.800">
    <property type="entry name" value="Anticodon-binding domain"/>
    <property type="match status" value="1"/>
</dbReference>
<dbReference type="Gene3D" id="3.30.930.10">
    <property type="entry name" value="Bira Bifunctional Protein, Domain 2"/>
    <property type="match status" value="1"/>
</dbReference>
<dbReference type="Gene3D" id="3.30.110.30">
    <property type="entry name" value="C-terminal domain of ProRS"/>
    <property type="match status" value="1"/>
</dbReference>
<dbReference type="HAMAP" id="MF_01571">
    <property type="entry name" value="Pro_tRNA_synth_type3"/>
    <property type="match status" value="1"/>
</dbReference>
<dbReference type="InterPro" id="IPR002314">
    <property type="entry name" value="aa-tRNA-synt_IIb"/>
</dbReference>
<dbReference type="InterPro" id="IPR006195">
    <property type="entry name" value="aa-tRNA-synth_II"/>
</dbReference>
<dbReference type="InterPro" id="IPR045864">
    <property type="entry name" value="aa-tRNA-synth_II/BPL/LPL"/>
</dbReference>
<dbReference type="InterPro" id="IPR004154">
    <property type="entry name" value="Anticodon-bd"/>
</dbReference>
<dbReference type="InterPro" id="IPR036621">
    <property type="entry name" value="Anticodon-bd_dom_sf"/>
</dbReference>
<dbReference type="InterPro" id="IPR002316">
    <property type="entry name" value="Pro-tRNA-ligase_IIa"/>
</dbReference>
<dbReference type="InterPro" id="IPR004499">
    <property type="entry name" value="Pro-tRNA-ligase_IIa_arc-type"/>
</dbReference>
<dbReference type="InterPro" id="IPR016061">
    <property type="entry name" value="Pro-tRNA_ligase_II_C"/>
</dbReference>
<dbReference type="InterPro" id="IPR017449">
    <property type="entry name" value="Pro-tRNA_synth_II"/>
</dbReference>
<dbReference type="PANTHER" id="PTHR43382:SF2">
    <property type="entry name" value="BIFUNCTIONAL GLUTAMATE_PROLINE--TRNA LIGASE"/>
    <property type="match status" value="1"/>
</dbReference>
<dbReference type="PANTHER" id="PTHR43382">
    <property type="entry name" value="PROLYL-TRNA SYNTHETASE"/>
    <property type="match status" value="1"/>
</dbReference>
<dbReference type="Pfam" id="PF03129">
    <property type="entry name" value="HGTP_anticodon"/>
    <property type="match status" value="1"/>
</dbReference>
<dbReference type="Pfam" id="PF09180">
    <property type="entry name" value="ProRS-C_1"/>
    <property type="match status" value="1"/>
</dbReference>
<dbReference type="Pfam" id="PF00587">
    <property type="entry name" value="tRNA-synt_2b"/>
    <property type="match status" value="1"/>
</dbReference>
<dbReference type="PRINTS" id="PR01046">
    <property type="entry name" value="TRNASYNTHPRO"/>
</dbReference>
<dbReference type="SMART" id="SM00946">
    <property type="entry name" value="ProRS-C_1"/>
    <property type="match status" value="1"/>
</dbReference>
<dbReference type="SUPFAM" id="SSF64586">
    <property type="entry name" value="C-terminal domain of ProRS"/>
    <property type="match status" value="1"/>
</dbReference>
<dbReference type="SUPFAM" id="SSF52954">
    <property type="entry name" value="Class II aaRS ABD-related"/>
    <property type="match status" value="1"/>
</dbReference>
<dbReference type="SUPFAM" id="SSF55681">
    <property type="entry name" value="Class II aaRS and biotin synthetases"/>
    <property type="match status" value="1"/>
</dbReference>
<dbReference type="PROSITE" id="PS50862">
    <property type="entry name" value="AA_TRNA_LIGASE_II"/>
    <property type="match status" value="1"/>
</dbReference>
<sequence>MVKKSENPKEWYNEIVRKANIIDDAYPVKGMPVYKPYGYKAFKFLMSLLENKLESIGAEPAWFPIVIPYSIFKKESEHIKGFEEEVFWIERAGNDKLEDPLILRPTSETEMYYMFAKWIESYRDLPLIIYMTNTVYRYETKSTKALIRGREVLWNETHSVHRSEEDAREHMAKAKEVYDYIFWDVLYLPYIWVRRPEWDKFPGGEETYAADAIMPDGRFLQVGTIHLLGQKFAIPFEIKFLDYHPFYKKYGDPNIYIKDKNGNEYKVHAPKEFWEELEKGKLTKTYTIKIGDKEYTISSIEEINEKLKEYDFRKYVWQTSYGISMRAFGGALYWLGDDLGLVMPYKIAPIQIVIIPILGKDDTKVIEYSKKVYELIKDKYRVYLDSDDTKTPGYKYYYYDLIGVPLRIDIGLKEVENNSITIVRRDNKKKYTISLNELEKIDQIFKEMEEDLKQKAKSFVNDMVVRVKTFDELKEAIEQNKIAKAPFCMRESCANQIKELLHAEVRGTDINPENAEKERCVYCGEPAKYWVYIGKTY</sequence>
<protein>
    <recommendedName>
        <fullName evidence="1">Proline--tRNA ligase</fullName>
        <ecNumber evidence="1">6.1.1.15</ecNumber>
    </recommendedName>
    <alternativeName>
        <fullName evidence="1">Prolyl-tRNA synthetase</fullName>
        <shortName evidence="1">ProRS</shortName>
    </alternativeName>
</protein>
<reference key="1">
    <citation type="journal article" date="2003" name="Proc. Natl. Acad. Sci. U.S.A.">
        <title>The genome of Nanoarchaeum equitans: insights into early archaeal evolution and derived parasitism.</title>
        <authorList>
            <person name="Waters E."/>
            <person name="Hohn M.J."/>
            <person name="Ahel I."/>
            <person name="Graham D.E."/>
            <person name="Adams M.D."/>
            <person name="Barnstead M."/>
            <person name="Beeson K.Y."/>
            <person name="Bibbs L."/>
            <person name="Bolanos R."/>
            <person name="Keller M."/>
            <person name="Kretz K."/>
            <person name="Lin X."/>
            <person name="Mathur E."/>
            <person name="Ni J."/>
            <person name="Podar M."/>
            <person name="Richardson T."/>
            <person name="Sutton G.G."/>
            <person name="Simon M."/>
            <person name="Soell D."/>
            <person name="Stetter K.O."/>
            <person name="Short J.M."/>
            <person name="Noorderwier M."/>
        </authorList>
    </citation>
    <scope>NUCLEOTIDE SEQUENCE [LARGE SCALE GENOMIC DNA]</scope>
    <source>
        <strain>Kin4-M</strain>
    </source>
</reference>
<comment type="function">
    <text evidence="1">Catalyzes the attachment of proline to tRNA(Pro) in a two-step reaction: proline is first activated by ATP to form Pro-AMP and then transferred to the acceptor end of tRNA(Pro).</text>
</comment>
<comment type="catalytic activity">
    <reaction evidence="1">
        <text>tRNA(Pro) + L-proline + ATP = L-prolyl-tRNA(Pro) + AMP + diphosphate</text>
        <dbReference type="Rhea" id="RHEA:14305"/>
        <dbReference type="Rhea" id="RHEA-COMP:9700"/>
        <dbReference type="Rhea" id="RHEA-COMP:9702"/>
        <dbReference type="ChEBI" id="CHEBI:30616"/>
        <dbReference type="ChEBI" id="CHEBI:33019"/>
        <dbReference type="ChEBI" id="CHEBI:60039"/>
        <dbReference type="ChEBI" id="CHEBI:78442"/>
        <dbReference type="ChEBI" id="CHEBI:78532"/>
        <dbReference type="ChEBI" id="CHEBI:456215"/>
        <dbReference type="EC" id="6.1.1.15"/>
    </reaction>
</comment>
<comment type="subunit">
    <text evidence="1">Homodimer.</text>
</comment>
<comment type="subcellular location">
    <subcellularLocation>
        <location evidence="1">Cytoplasm</location>
    </subcellularLocation>
</comment>
<comment type="domain">
    <text evidence="1">Consists of three domains: the N-terminal catalytic domain, the anticodon-binding domain and the C-terminal extension.</text>
</comment>
<comment type="similarity">
    <text evidence="1">Belongs to the class-II aminoacyl-tRNA synthetase family. ProS type 3 subfamily.</text>
</comment>
<gene>
    <name evidence="1" type="primary">proS</name>
    <name type="ordered locus">NEQ210</name>
</gene>
<evidence type="ECO:0000255" key="1">
    <source>
        <dbReference type="HAMAP-Rule" id="MF_01571"/>
    </source>
</evidence>
<proteinExistence type="inferred from homology"/>
<name>SYP_NANEQ</name>
<keyword id="KW-0030">Aminoacyl-tRNA synthetase</keyword>
<keyword id="KW-0067">ATP-binding</keyword>
<keyword id="KW-0963">Cytoplasm</keyword>
<keyword id="KW-0436">Ligase</keyword>
<keyword id="KW-0547">Nucleotide-binding</keyword>
<keyword id="KW-0648">Protein biosynthesis</keyword>
<keyword id="KW-1185">Reference proteome</keyword>
<accession>Q74ND5</accession>
<organism>
    <name type="scientific">Nanoarchaeum equitans (strain Kin4-M)</name>
    <dbReference type="NCBI Taxonomy" id="228908"/>
    <lineage>
        <taxon>Archaea</taxon>
        <taxon>Nanobdellota</taxon>
        <taxon>Candidatus Nanoarchaeia</taxon>
        <taxon>Nanoarchaeales</taxon>
        <taxon>Nanoarchaeaceae</taxon>
        <taxon>Nanoarchaeum</taxon>
    </lineage>
</organism>
<feature type="chain" id="PRO_0000249165" description="Proline--tRNA ligase">
    <location>
        <begin position="1"/>
        <end position="537"/>
    </location>
</feature>